<protein>
    <recommendedName>
        <fullName>Metacaspase-1</fullName>
        <ecNumber>3.4.22.-</ecNumber>
    </recommendedName>
</protein>
<name>MCA1_AJECN</name>
<reference key="1">
    <citation type="journal article" date="2009" name="Genome Res.">
        <title>Comparative genomic analyses of the human fungal pathogens Coccidioides and their relatives.</title>
        <authorList>
            <person name="Sharpton T.J."/>
            <person name="Stajich J.E."/>
            <person name="Rounsley S.D."/>
            <person name="Gardner M.J."/>
            <person name="Wortman J.R."/>
            <person name="Jordar V.S."/>
            <person name="Maiti R."/>
            <person name="Kodira C.D."/>
            <person name="Neafsey D.E."/>
            <person name="Zeng Q."/>
            <person name="Hung C.-Y."/>
            <person name="McMahan C."/>
            <person name="Muszewska A."/>
            <person name="Grynberg M."/>
            <person name="Mandel M.A."/>
            <person name="Kellner E.M."/>
            <person name="Barker B.M."/>
            <person name="Galgiani J.N."/>
            <person name="Orbach M.J."/>
            <person name="Kirkland T.N."/>
            <person name="Cole G.T."/>
            <person name="Henn M.R."/>
            <person name="Birren B.W."/>
            <person name="Taylor J.W."/>
        </authorList>
    </citation>
    <scope>NUCLEOTIDE SEQUENCE [LARGE SCALE GENOMIC DNA]</scope>
    <source>
        <strain>NAm1 / WU24</strain>
    </source>
</reference>
<feature type="propeptide" id="PRO_0000333608" evidence="2">
    <location>
        <begin position="1"/>
        <end status="unknown"/>
    </location>
</feature>
<feature type="chain" id="PRO_0000333609" description="Metacaspase-1">
    <location>
        <begin status="unknown"/>
        <end position="356"/>
    </location>
</feature>
<feature type="region of interest" description="Disordered" evidence="3">
    <location>
        <begin position="1"/>
        <end position="47"/>
    </location>
</feature>
<feature type="active site" evidence="1">
    <location>
        <position position="147"/>
    </location>
</feature>
<feature type="active site" evidence="1">
    <location>
        <position position="203"/>
    </location>
</feature>
<gene>
    <name type="primary">MCA1</name>
    <name type="ORF">HCAG_05526</name>
</gene>
<proteinExistence type="inferred from homology"/>
<sequence>MYSGRSGAPPPAHSPYPNSYNHGPPGHSAGHNVPPPPPTQPVQFGHGAPQGYSFQYSNCTGKRKALLIGINYFGQRGQLRGCINDVKNMSTYLNQNFGYAREDMVILTDDQQNPMSQPTKANILRAMHWLVKDARPNDSLFFHYSGHGGQTKDLDGDEEDGNDEVIYPVDFRSAGHIVDDEMHRIMVKSLLPGVRLTAIFDSCHSGSALDLPYIYSTQGILKEPNLAKEAGQGLLSVVSAYARGDVSGMLSTVGGLIKKATSGDASHSKARQTKTSPADVIMWSGSKDNQTSQDATIAGEATGAMSWAFITALKKNPQQSYVQLLRSIRDELATKYSQKPQLSCSHPLNTDLLYVM</sequence>
<keyword id="KW-0053">Apoptosis</keyword>
<keyword id="KW-0378">Hydrolase</keyword>
<keyword id="KW-0645">Protease</keyword>
<keyword id="KW-1185">Reference proteome</keyword>
<keyword id="KW-0788">Thiol protease</keyword>
<keyword id="KW-0865">Zymogen</keyword>
<organism>
    <name type="scientific">Ajellomyces capsulatus (strain NAm1 / WU24)</name>
    <name type="common">Darling's disease fungus</name>
    <name type="synonym">Histoplasma capsulatum</name>
    <dbReference type="NCBI Taxonomy" id="2059318"/>
    <lineage>
        <taxon>Eukaryota</taxon>
        <taxon>Fungi</taxon>
        <taxon>Dikarya</taxon>
        <taxon>Ascomycota</taxon>
        <taxon>Pezizomycotina</taxon>
        <taxon>Eurotiomycetes</taxon>
        <taxon>Eurotiomycetidae</taxon>
        <taxon>Onygenales</taxon>
        <taxon>Ajellomycetaceae</taxon>
        <taxon>Histoplasma</taxon>
    </lineage>
</organism>
<accession>A6R7B8</accession>
<dbReference type="EC" id="3.4.22.-"/>
<dbReference type="EMBL" id="CH476659">
    <property type="protein sequence ID" value="EDN09027.1"/>
    <property type="molecule type" value="Genomic_DNA"/>
</dbReference>
<dbReference type="SMR" id="A6R7B8"/>
<dbReference type="STRING" id="339724.A6R7B8"/>
<dbReference type="MEROPS" id="C14.035"/>
<dbReference type="KEGG" id="aje:HCAG_05526"/>
<dbReference type="VEuPathDB" id="FungiDB:HCAG_05526"/>
<dbReference type="HOGENOM" id="CLU_029389_0_2_1"/>
<dbReference type="OMA" id="MHRIMVT"/>
<dbReference type="OrthoDB" id="8274at299071"/>
<dbReference type="Proteomes" id="UP000009297">
    <property type="component" value="Unassembled WGS sequence"/>
</dbReference>
<dbReference type="GO" id="GO:0005737">
    <property type="term" value="C:cytoplasm"/>
    <property type="evidence" value="ECO:0007669"/>
    <property type="project" value="TreeGrafter"/>
</dbReference>
<dbReference type="GO" id="GO:0004197">
    <property type="term" value="F:cysteine-type endopeptidase activity"/>
    <property type="evidence" value="ECO:0007669"/>
    <property type="project" value="InterPro"/>
</dbReference>
<dbReference type="GO" id="GO:0006915">
    <property type="term" value="P:apoptotic process"/>
    <property type="evidence" value="ECO:0007669"/>
    <property type="project" value="UniProtKB-KW"/>
</dbReference>
<dbReference type="GO" id="GO:0006508">
    <property type="term" value="P:proteolysis"/>
    <property type="evidence" value="ECO:0007669"/>
    <property type="project" value="UniProtKB-KW"/>
</dbReference>
<dbReference type="Gene3D" id="3.40.50.12660">
    <property type="match status" value="1"/>
</dbReference>
<dbReference type="InterPro" id="IPR029030">
    <property type="entry name" value="Caspase-like_dom_sf"/>
</dbReference>
<dbReference type="InterPro" id="IPR050452">
    <property type="entry name" value="Metacaspase"/>
</dbReference>
<dbReference type="InterPro" id="IPR011600">
    <property type="entry name" value="Pept_C14_caspase"/>
</dbReference>
<dbReference type="PANTHER" id="PTHR48104:SF30">
    <property type="entry name" value="METACASPASE-1"/>
    <property type="match status" value="1"/>
</dbReference>
<dbReference type="PANTHER" id="PTHR48104">
    <property type="entry name" value="METACASPASE-4"/>
    <property type="match status" value="1"/>
</dbReference>
<dbReference type="Pfam" id="PF00656">
    <property type="entry name" value="Peptidase_C14"/>
    <property type="match status" value="1"/>
</dbReference>
<dbReference type="SUPFAM" id="SSF52129">
    <property type="entry name" value="Caspase-like"/>
    <property type="match status" value="1"/>
</dbReference>
<evidence type="ECO:0000250" key="1"/>
<evidence type="ECO:0000255" key="2"/>
<evidence type="ECO:0000256" key="3">
    <source>
        <dbReference type="SAM" id="MobiDB-lite"/>
    </source>
</evidence>
<evidence type="ECO:0000305" key="4"/>
<comment type="function">
    <text evidence="1">Involved in cell death (apoptosis).</text>
</comment>
<comment type="similarity">
    <text evidence="4">Belongs to the peptidase C14B family.</text>
</comment>